<reference key="1">
    <citation type="journal article" date="2005" name="J. Bacteriol.">
        <title>Insights into genome plasticity and pathogenicity of the plant pathogenic Bacterium Xanthomonas campestris pv. vesicatoria revealed by the complete genome sequence.</title>
        <authorList>
            <person name="Thieme F."/>
            <person name="Koebnik R."/>
            <person name="Bekel T."/>
            <person name="Berger C."/>
            <person name="Boch J."/>
            <person name="Buettner D."/>
            <person name="Caldana C."/>
            <person name="Gaigalat L."/>
            <person name="Goesmann A."/>
            <person name="Kay S."/>
            <person name="Kirchner O."/>
            <person name="Lanz C."/>
            <person name="Linke B."/>
            <person name="McHardy A.C."/>
            <person name="Meyer F."/>
            <person name="Mittenhuber G."/>
            <person name="Nies D.H."/>
            <person name="Niesbach-Kloesgen U."/>
            <person name="Patschkowski T."/>
            <person name="Rueckert C."/>
            <person name="Rupp O."/>
            <person name="Schneiker S."/>
            <person name="Schuster S.C."/>
            <person name="Vorhoelter F.J."/>
            <person name="Weber E."/>
            <person name="Puehler A."/>
            <person name="Bonas U."/>
            <person name="Bartels D."/>
            <person name="Kaiser O."/>
        </authorList>
    </citation>
    <scope>NUCLEOTIDE SEQUENCE [LARGE SCALE GENOMIC DNA]</scope>
    <source>
        <strain>85-10</strain>
    </source>
</reference>
<name>MTND_XANE5</name>
<dbReference type="EC" id="1.13.11.54" evidence="1"/>
<dbReference type="EC" id="1.13.11.53" evidence="1"/>
<dbReference type="EMBL" id="AM039952">
    <property type="protein sequence ID" value="CAJ23562.1"/>
    <property type="molecule type" value="Genomic_DNA"/>
</dbReference>
<dbReference type="RefSeq" id="WP_008571451.1">
    <property type="nucleotide sequence ID" value="NZ_CP017190.1"/>
</dbReference>
<dbReference type="SMR" id="Q3BUE7"/>
<dbReference type="STRING" id="456327.BJD11_13000"/>
<dbReference type="KEGG" id="xcv:XCV1885"/>
<dbReference type="eggNOG" id="COG1791">
    <property type="taxonomic scope" value="Bacteria"/>
</dbReference>
<dbReference type="HOGENOM" id="CLU_125400_0_0_6"/>
<dbReference type="UniPathway" id="UPA00904">
    <property type="reaction ID" value="UER00878"/>
</dbReference>
<dbReference type="Proteomes" id="UP000007069">
    <property type="component" value="Chromosome"/>
</dbReference>
<dbReference type="GO" id="GO:0010308">
    <property type="term" value="F:acireductone dioxygenase (Ni2+-requiring) activity"/>
    <property type="evidence" value="ECO:0007669"/>
    <property type="project" value="UniProtKB-UniRule"/>
</dbReference>
<dbReference type="GO" id="GO:0010309">
    <property type="term" value="F:acireductone dioxygenase [iron(II)-requiring] activity"/>
    <property type="evidence" value="ECO:0007669"/>
    <property type="project" value="UniProtKB-UniRule"/>
</dbReference>
<dbReference type="GO" id="GO:0005506">
    <property type="term" value="F:iron ion binding"/>
    <property type="evidence" value="ECO:0007669"/>
    <property type="project" value="UniProtKB-UniRule"/>
</dbReference>
<dbReference type="GO" id="GO:0016151">
    <property type="term" value="F:nickel cation binding"/>
    <property type="evidence" value="ECO:0007669"/>
    <property type="project" value="UniProtKB-UniRule"/>
</dbReference>
<dbReference type="GO" id="GO:0019509">
    <property type="term" value="P:L-methionine salvage from methylthioadenosine"/>
    <property type="evidence" value="ECO:0007669"/>
    <property type="project" value="UniProtKB-UniRule"/>
</dbReference>
<dbReference type="GO" id="GO:0019284">
    <property type="term" value="P:L-methionine salvage from S-adenosylmethionine"/>
    <property type="evidence" value="ECO:0007669"/>
    <property type="project" value="InterPro"/>
</dbReference>
<dbReference type="CDD" id="cd02232">
    <property type="entry name" value="cupin_ARD"/>
    <property type="match status" value="1"/>
</dbReference>
<dbReference type="FunFam" id="2.60.120.10:FF:000056">
    <property type="entry name" value="Acireductone dioxygenase"/>
    <property type="match status" value="1"/>
</dbReference>
<dbReference type="Gene3D" id="2.60.120.10">
    <property type="entry name" value="Jelly Rolls"/>
    <property type="match status" value="1"/>
</dbReference>
<dbReference type="HAMAP" id="MF_01682">
    <property type="entry name" value="Salvage_MtnD"/>
    <property type="match status" value="1"/>
</dbReference>
<dbReference type="InterPro" id="IPR004313">
    <property type="entry name" value="ARD"/>
</dbReference>
<dbReference type="InterPro" id="IPR023956">
    <property type="entry name" value="ARD_bac"/>
</dbReference>
<dbReference type="InterPro" id="IPR014710">
    <property type="entry name" value="RmlC-like_jellyroll"/>
</dbReference>
<dbReference type="InterPro" id="IPR011051">
    <property type="entry name" value="RmlC_Cupin_sf"/>
</dbReference>
<dbReference type="PANTHER" id="PTHR23418">
    <property type="entry name" value="ACIREDUCTONE DIOXYGENASE"/>
    <property type="match status" value="1"/>
</dbReference>
<dbReference type="PANTHER" id="PTHR23418:SF0">
    <property type="entry name" value="ACIREDUCTONE DIOXYGENASE"/>
    <property type="match status" value="1"/>
</dbReference>
<dbReference type="Pfam" id="PF03079">
    <property type="entry name" value="ARD"/>
    <property type="match status" value="1"/>
</dbReference>
<dbReference type="SUPFAM" id="SSF51182">
    <property type="entry name" value="RmlC-like cupins"/>
    <property type="match status" value="1"/>
</dbReference>
<feature type="chain" id="PRO_0000359250" description="Acireductone dioxygenase">
    <location>
        <begin position="1"/>
        <end position="188"/>
    </location>
</feature>
<feature type="binding site" evidence="1">
    <location>
        <position position="97"/>
    </location>
    <ligand>
        <name>Fe(2+)</name>
        <dbReference type="ChEBI" id="CHEBI:29033"/>
    </ligand>
</feature>
<feature type="binding site" evidence="1">
    <location>
        <position position="97"/>
    </location>
    <ligand>
        <name>Ni(2+)</name>
        <dbReference type="ChEBI" id="CHEBI:49786"/>
    </ligand>
</feature>
<feature type="binding site" evidence="1">
    <location>
        <position position="99"/>
    </location>
    <ligand>
        <name>Fe(2+)</name>
        <dbReference type="ChEBI" id="CHEBI:29033"/>
    </ligand>
</feature>
<feature type="binding site" evidence="1">
    <location>
        <position position="99"/>
    </location>
    <ligand>
        <name>Ni(2+)</name>
        <dbReference type="ChEBI" id="CHEBI:49786"/>
    </ligand>
</feature>
<feature type="binding site" evidence="1">
    <location>
        <position position="103"/>
    </location>
    <ligand>
        <name>Fe(2+)</name>
        <dbReference type="ChEBI" id="CHEBI:29033"/>
    </ligand>
</feature>
<feature type="binding site" evidence="1">
    <location>
        <position position="103"/>
    </location>
    <ligand>
        <name>Ni(2+)</name>
        <dbReference type="ChEBI" id="CHEBI:49786"/>
    </ligand>
</feature>
<feature type="binding site" evidence="1">
    <location>
        <position position="141"/>
    </location>
    <ligand>
        <name>Fe(2+)</name>
        <dbReference type="ChEBI" id="CHEBI:29033"/>
    </ligand>
</feature>
<feature type="binding site" evidence="1">
    <location>
        <position position="141"/>
    </location>
    <ligand>
        <name>Ni(2+)</name>
        <dbReference type="ChEBI" id="CHEBI:49786"/>
    </ligand>
</feature>
<feature type="site" description="May play a role in metal incorporation in vivo" evidence="1">
    <location>
        <position position="96"/>
    </location>
</feature>
<feature type="site" description="May play a role in transmitting local conformational changes" evidence="1">
    <location>
        <position position="102"/>
    </location>
</feature>
<feature type="site" description="Important to generate the dianion" evidence="1">
    <location>
        <position position="105"/>
    </location>
</feature>
<proteinExistence type="inferred from homology"/>
<accession>Q3BUE7</accession>
<evidence type="ECO:0000255" key="1">
    <source>
        <dbReference type="HAMAP-Rule" id="MF_01682"/>
    </source>
</evidence>
<protein>
    <recommendedName>
        <fullName evidence="1">Acireductone dioxygenase</fullName>
    </recommendedName>
    <alternativeName>
        <fullName evidence="1">1,2-dihydroxy-3-keto-5-methylthiopentene dioxygenase</fullName>
        <shortName evidence="1">DHK-MTPene dioxygenase</shortName>
    </alternativeName>
    <alternativeName>
        <fullName evidence="1">Acireductone dioxygenase (Fe(2+)-requiring)</fullName>
        <shortName evidence="1">ARD'</shortName>
        <shortName evidence="1">Fe-ARD</shortName>
        <ecNumber evidence="1">1.13.11.54</ecNumber>
    </alternativeName>
    <alternativeName>
        <fullName evidence="1">Acireductone dioxygenase (Ni(2+)-requiring)</fullName>
        <shortName evidence="1">ARD</shortName>
        <shortName evidence="1">Ni-ARD</shortName>
        <ecNumber evidence="1">1.13.11.53</ecNumber>
    </alternativeName>
</protein>
<comment type="function">
    <text evidence="1">Catalyzes 2 different reactions between oxygen and the acireductone 1,2-dihydroxy-3-keto-5-methylthiopentene (DHK-MTPene) depending upon the metal bound in the active site. Fe-containing acireductone dioxygenase (Fe-ARD) produces formate and 2-keto-4-methylthiobutyrate (KMTB), the alpha-ketoacid precursor of methionine in the methionine recycle pathway. Ni-containing acireductone dioxygenase (Ni-ARD) produces methylthiopropionate, carbon monoxide and formate, and does not lie on the methionine recycle pathway.</text>
</comment>
<comment type="catalytic activity">
    <reaction evidence="1">
        <text>1,2-dihydroxy-5-(methylsulfanyl)pent-1-en-3-one + O2 = 3-(methylsulfanyl)propanoate + CO + formate + 2 H(+)</text>
        <dbReference type="Rhea" id="RHEA:14161"/>
        <dbReference type="ChEBI" id="CHEBI:15378"/>
        <dbReference type="ChEBI" id="CHEBI:15379"/>
        <dbReference type="ChEBI" id="CHEBI:15740"/>
        <dbReference type="ChEBI" id="CHEBI:17245"/>
        <dbReference type="ChEBI" id="CHEBI:49016"/>
        <dbReference type="ChEBI" id="CHEBI:49252"/>
        <dbReference type="EC" id="1.13.11.53"/>
    </reaction>
</comment>
<comment type="catalytic activity">
    <reaction evidence="1">
        <text>1,2-dihydroxy-5-(methylsulfanyl)pent-1-en-3-one + O2 = 4-methylsulfanyl-2-oxobutanoate + formate + 2 H(+)</text>
        <dbReference type="Rhea" id="RHEA:24504"/>
        <dbReference type="ChEBI" id="CHEBI:15378"/>
        <dbReference type="ChEBI" id="CHEBI:15379"/>
        <dbReference type="ChEBI" id="CHEBI:15740"/>
        <dbReference type="ChEBI" id="CHEBI:16723"/>
        <dbReference type="ChEBI" id="CHEBI:49252"/>
        <dbReference type="EC" id="1.13.11.54"/>
    </reaction>
</comment>
<comment type="cofactor">
    <cofactor evidence="1">
        <name>Fe(2+)</name>
        <dbReference type="ChEBI" id="CHEBI:29033"/>
    </cofactor>
    <text evidence="1">Binds 1 Fe(2+) cation per monomer.</text>
</comment>
<comment type="cofactor">
    <cofactor evidence="1">
        <name>Ni(2+)</name>
        <dbReference type="ChEBI" id="CHEBI:49786"/>
    </cofactor>
    <text evidence="1">Binds 1 nickel ion per monomer.</text>
</comment>
<comment type="pathway">
    <text evidence="1">Amino-acid biosynthesis; L-methionine biosynthesis via salvage pathway; L-methionine from S-methyl-5-thio-alpha-D-ribose 1-phosphate: step 5/6.</text>
</comment>
<comment type="subunit">
    <text evidence="1">Monomer.</text>
</comment>
<comment type="similarity">
    <text evidence="1">Belongs to the acireductone dioxygenase (ARD) family.</text>
</comment>
<keyword id="KW-0028">Amino-acid biosynthesis</keyword>
<keyword id="KW-0223">Dioxygenase</keyword>
<keyword id="KW-0408">Iron</keyword>
<keyword id="KW-0479">Metal-binding</keyword>
<keyword id="KW-0486">Methionine biosynthesis</keyword>
<keyword id="KW-0533">Nickel</keyword>
<keyword id="KW-0560">Oxidoreductase</keyword>
<organism>
    <name type="scientific">Xanthomonas euvesicatoria pv. vesicatoria (strain 85-10)</name>
    <name type="common">Xanthomonas campestris pv. vesicatoria</name>
    <dbReference type="NCBI Taxonomy" id="316273"/>
    <lineage>
        <taxon>Bacteria</taxon>
        <taxon>Pseudomonadati</taxon>
        <taxon>Pseudomonadota</taxon>
        <taxon>Gammaproteobacteria</taxon>
        <taxon>Lysobacterales</taxon>
        <taxon>Lysobacteraceae</taxon>
        <taxon>Xanthomonas</taxon>
    </lineage>
</organism>
<gene>
    <name evidence="1" type="primary">mtnD</name>
    <name type="ordered locus">XCV1885</name>
</gene>
<sequence length="188" mass="21259">MSRLRIFADTNPATPEFDSRDGDAIAAQLQKIGVTFERWHASAPVEPGATPEQVMDAYRADIDRISAERGFKTVDVVSIAPDNPKREEMRAKFLDEHFHKEDEVRFFVAGSGLFTLHVDAKVYEIECVKDDLIAVPDGTLHWFDMGPEPHFVAIRFFTEPDGWVGHFTGTEIAKQFPRYAPEKPHKAS</sequence>